<reference key="1">
    <citation type="journal article" date="2003" name="DNA Res.">
        <title>Complete genome structure of Gloeobacter violaceus PCC 7421, a cyanobacterium that lacks thylakoids.</title>
        <authorList>
            <person name="Nakamura Y."/>
            <person name="Kaneko T."/>
            <person name="Sato S."/>
            <person name="Mimuro M."/>
            <person name="Miyashita H."/>
            <person name="Tsuchiya T."/>
            <person name="Sasamoto S."/>
            <person name="Watanabe A."/>
            <person name="Kawashima K."/>
            <person name="Kishida Y."/>
            <person name="Kiyokawa C."/>
            <person name="Kohara M."/>
            <person name="Matsumoto M."/>
            <person name="Matsuno A."/>
            <person name="Nakazaki N."/>
            <person name="Shimpo S."/>
            <person name="Takeuchi C."/>
            <person name="Yamada M."/>
            <person name="Tabata S."/>
        </authorList>
    </citation>
    <scope>NUCLEOTIDE SEQUENCE [LARGE SCALE GENOMIC DNA]</scope>
    <source>
        <strain>ATCC 29082 / PCC 7421</strain>
    </source>
</reference>
<keyword id="KW-0997">Cell inner membrane</keyword>
<keyword id="KW-1003">Cell membrane</keyword>
<keyword id="KW-0249">Electron transport</keyword>
<keyword id="KW-0472">Membrane</keyword>
<keyword id="KW-0602">Photosynthesis</keyword>
<keyword id="KW-1185">Reference proteome</keyword>
<keyword id="KW-0812">Transmembrane</keyword>
<keyword id="KW-1133">Transmembrane helix</keyword>
<keyword id="KW-0813">Transport</keyword>
<sequence>MTGEIFFVAGLVFVLTLVGMAIGFGVLKLRGEGKEA</sequence>
<evidence type="ECO:0000255" key="1">
    <source>
        <dbReference type="HAMAP-Rule" id="MF_00396"/>
    </source>
</evidence>
<evidence type="ECO:0000305" key="2"/>
<gene>
    <name evidence="1" type="primary">petM</name>
    <name type="ordered locus">gsl1083</name>
</gene>
<comment type="function">
    <text evidence="1">Component of the cytochrome b6-f complex, which mediates electron transfer between photosystem II (PSII) and photosystem I (PSI), cyclic electron flow around PSI, and state transitions.</text>
</comment>
<comment type="subunit">
    <text evidence="1">The 4 large subunits of the cytochrome b6-f complex are cytochrome b6, subunit IV (17 kDa polypeptide, PetD), cytochrome f and the Rieske protein, while the 4 small subunits are PetG, PetL, PetM and PetN. The complex functions as a dimer.</text>
</comment>
<comment type="subcellular location">
    <subcellularLocation>
        <location evidence="1">Cell inner membrane</location>
        <topology evidence="1">Single-pass membrane protein</topology>
    </subcellularLocation>
</comment>
<comment type="similarity">
    <text evidence="1">Belongs to the PetM family.</text>
</comment>
<comment type="sequence caution" evidence="2">
    <conflict type="erroneous initiation">
        <sequence resource="EMBL-CDS" id="BAC89024"/>
    </conflict>
</comment>
<dbReference type="EMBL" id="BA000045">
    <property type="protein sequence ID" value="BAC89024.1"/>
    <property type="status" value="ALT_INIT"/>
    <property type="molecule type" value="Genomic_DNA"/>
</dbReference>
<dbReference type="RefSeq" id="NP_924029.1">
    <property type="nucleotide sequence ID" value="NC_005125.1"/>
</dbReference>
<dbReference type="SMR" id="Q7NLN8"/>
<dbReference type="STRING" id="251221.gene:10758562"/>
<dbReference type="EnsemblBacteria" id="BAC89024">
    <property type="protein sequence ID" value="BAC89024"/>
    <property type="gene ID" value="BAC89024"/>
</dbReference>
<dbReference type="KEGG" id="gvi:gsl1083"/>
<dbReference type="HOGENOM" id="CLU_2825034_0_0_3"/>
<dbReference type="InParanoid" id="Q7NLN8"/>
<dbReference type="OrthoDB" id="561129at2"/>
<dbReference type="Proteomes" id="UP000000557">
    <property type="component" value="Chromosome"/>
</dbReference>
<dbReference type="GO" id="GO:0009512">
    <property type="term" value="C:cytochrome b6f complex"/>
    <property type="evidence" value="ECO:0007669"/>
    <property type="project" value="InterPro"/>
</dbReference>
<dbReference type="GO" id="GO:0005886">
    <property type="term" value="C:plasma membrane"/>
    <property type="evidence" value="ECO:0007669"/>
    <property type="project" value="UniProtKB-SubCell"/>
</dbReference>
<dbReference type="GO" id="GO:0009055">
    <property type="term" value="F:electron transfer activity"/>
    <property type="evidence" value="ECO:0007669"/>
    <property type="project" value="UniProtKB-UniRule"/>
</dbReference>
<dbReference type="GO" id="GO:0015979">
    <property type="term" value="P:photosynthesis"/>
    <property type="evidence" value="ECO:0007669"/>
    <property type="project" value="UniProtKB-KW"/>
</dbReference>
<dbReference type="HAMAP" id="MF_00396">
    <property type="entry name" value="Cytb6_f_PetM"/>
    <property type="match status" value="1"/>
</dbReference>
<dbReference type="InterPro" id="IPR012595">
    <property type="entry name" value="PetM_cyt_b6/f_cplx_su7"/>
</dbReference>
<dbReference type="Pfam" id="PF08041">
    <property type="entry name" value="PetM"/>
    <property type="match status" value="1"/>
</dbReference>
<name>PETM_GLOVI</name>
<organism>
    <name type="scientific">Gloeobacter violaceus (strain ATCC 29082 / PCC 7421)</name>
    <dbReference type="NCBI Taxonomy" id="251221"/>
    <lineage>
        <taxon>Bacteria</taxon>
        <taxon>Bacillati</taxon>
        <taxon>Cyanobacteriota</taxon>
        <taxon>Cyanophyceae</taxon>
        <taxon>Gloeobacterales</taxon>
        <taxon>Gloeobacteraceae</taxon>
        <taxon>Gloeobacter</taxon>
    </lineage>
</organism>
<feature type="chain" id="PRO_0000233229" description="Cytochrome b6-f complex subunit 7">
    <location>
        <begin position="1"/>
        <end position="36"/>
    </location>
</feature>
<feature type="transmembrane region" description="Helical" evidence="1">
    <location>
        <begin position="5"/>
        <end position="25"/>
    </location>
</feature>
<proteinExistence type="inferred from homology"/>
<accession>Q7NLN8</accession>
<protein>
    <recommendedName>
        <fullName evidence="1">Cytochrome b6-f complex subunit 7</fullName>
    </recommendedName>
    <alternativeName>
        <fullName evidence="1">Cytochrome b6-f complex subunit PetM</fullName>
    </alternativeName>
    <alternativeName>
        <fullName evidence="1">Cytochrome b6-f complex subunit VII</fullName>
    </alternativeName>
</protein>